<proteinExistence type="inferred from homology"/>
<feature type="chain" id="PRO_0000354960" description="Catalase-peroxidase">
    <location>
        <begin position="1"/>
        <end position="757"/>
    </location>
</feature>
<feature type="region of interest" description="Disordered" evidence="2">
    <location>
        <begin position="210"/>
        <end position="231"/>
    </location>
</feature>
<feature type="region of interest" description="Disordered" evidence="2">
    <location>
        <begin position="293"/>
        <end position="312"/>
    </location>
</feature>
<feature type="compositionally biased region" description="Basic and acidic residues" evidence="2">
    <location>
        <begin position="212"/>
        <end position="231"/>
    </location>
</feature>
<feature type="active site" description="Proton acceptor" evidence="1">
    <location>
        <position position="102"/>
    </location>
</feature>
<feature type="binding site" description="axial binding residue" evidence="1">
    <location>
        <position position="289"/>
    </location>
    <ligand>
        <name>heme b</name>
        <dbReference type="ChEBI" id="CHEBI:60344"/>
    </ligand>
    <ligandPart>
        <name>Fe</name>
        <dbReference type="ChEBI" id="CHEBI:18248"/>
    </ligandPart>
</feature>
<feature type="site" description="Transition state stabilizer" evidence="1">
    <location>
        <position position="98"/>
    </location>
</feature>
<feature type="cross-link" description="Tryptophyl-tyrosyl-methioninium (Trp-Tyr) (with M-274)" evidence="1">
    <location>
        <begin position="101"/>
        <end position="248"/>
    </location>
</feature>
<feature type="cross-link" description="Tryptophyl-tyrosyl-methioninium (Tyr-Met) (with W-101)" evidence="1">
    <location>
        <begin position="248"/>
        <end position="274"/>
    </location>
</feature>
<accession>B0U3C6</accession>
<name>KATG_XYLFM</name>
<gene>
    <name evidence="1" type="primary">katG</name>
    <name type="ordered locus">Xfasm12_1432</name>
</gene>
<evidence type="ECO:0000255" key="1">
    <source>
        <dbReference type="HAMAP-Rule" id="MF_01961"/>
    </source>
</evidence>
<evidence type="ECO:0000256" key="2">
    <source>
        <dbReference type="SAM" id="MobiDB-lite"/>
    </source>
</evidence>
<dbReference type="EC" id="1.11.1.21" evidence="1"/>
<dbReference type="EMBL" id="CP000941">
    <property type="protein sequence ID" value="ACA12355.1"/>
    <property type="molecule type" value="Genomic_DNA"/>
</dbReference>
<dbReference type="RefSeq" id="WP_004083420.1">
    <property type="nucleotide sequence ID" value="NC_010513.1"/>
</dbReference>
<dbReference type="SMR" id="B0U3C6"/>
<dbReference type="KEGG" id="xfm:Xfasm12_1432"/>
<dbReference type="HOGENOM" id="CLU_025424_2_0_6"/>
<dbReference type="GO" id="GO:0005829">
    <property type="term" value="C:cytosol"/>
    <property type="evidence" value="ECO:0007669"/>
    <property type="project" value="TreeGrafter"/>
</dbReference>
<dbReference type="GO" id="GO:0004096">
    <property type="term" value="F:catalase activity"/>
    <property type="evidence" value="ECO:0007669"/>
    <property type="project" value="UniProtKB-UniRule"/>
</dbReference>
<dbReference type="GO" id="GO:0020037">
    <property type="term" value="F:heme binding"/>
    <property type="evidence" value="ECO:0007669"/>
    <property type="project" value="InterPro"/>
</dbReference>
<dbReference type="GO" id="GO:0046872">
    <property type="term" value="F:metal ion binding"/>
    <property type="evidence" value="ECO:0007669"/>
    <property type="project" value="UniProtKB-KW"/>
</dbReference>
<dbReference type="GO" id="GO:0070301">
    <property type="term" value="P:cellular response to hydrogen peroxide"/>
    <property type="evidence" value="ECO:0007669"/>
    <property type="project" value="TreeGrafter"/>
</dbReference>
<dbReference type="GO" id="GO:0042744">
    <property type="term" value="P:hydrogen peroxide catabolic process"/>
    <property type="evidence" value="ECO:0007669"/>
    <property type="project" value="UniProtKB-KW"/>
</dbReference>
<dbReference type="CDD" id="cd00649">
    <property type="entry name" value="catalase_peroxidase_1"/>
    <property type="match status" value="1"/>
</dbReference>
<dbReference type="CDD" id="cd08200">
    <property type="entry name" value="catalase_peroxidase_2"/>
    <property type="match status" value="1"/>
</dbReference>
<dbReference type="FunFam" id="1.10.420.10:FF:000002">
    <property type="entry name" value="Catalase-peroxidase"/>
    <property type="match status" value="1"/>
</dbReference>
<dbReference type="FunFam" id="1.10.420.10:FF:000004">
    <property type="entry name" value="Catalase-peroxidase"/>
    <property type="match status" value="1"/>
</dbReference>
<dbReference type="FunFam" id="1.10.520.10:FF:000002">
    <property type="entry name" value="Catalase-peroxidase"/>
    <property type="match status" value="1"/>
</dbReference>
<dbReference type="Gene3D" id="1.10.520.10">
    <property type="match status" value="2"/>
</dbReference>
<dbReference type="Gene3D" id="1.10.420.10">
    <property type="entry name" value="Peroxidase, domain 2"/>
    <property type="match status" value="2"/>
</dbReference>
<dbReference type="HAMAP" id="MF_01961">
    <property type="entry name" value="Catal_peroxid"/>
    <property type="match status" value="1"/>
</dbReference>
<dbReference type="InterPro" id="IPR000763">
    <property type="entry name" value="Catalase_peroxidase"/>
</dbReference>
<dbReference type="InterPro" id="IPR002016">
    <property type="entry name" value="Haem_peroxidase"/>
</dbReference>
<dbReference type="InterPro" id="IPR010255">
    <property type="entry name" value="Haem_peroxidase_sf"/>
</dbReference>
<dbReference type="InterPro" id="IPR019794">
    <property type="entry name" value="Peroxidases_AS"/>
</dbReference>
<dbReference type="InterPro" id="IPR019793">
    <property type="entry name" value="Peroxidases_heam-ligand_BS"/>
</dbReference>
<dbReference type="NCBIfam" id="TIGR00198">
    <property type="entry name" value="cat_per_HPI"/>
    <property type="match status" value="1"/>
</dbReference>
<dbReference type="NCBIfam" id="NF011635">
    <property type="entry name" value="PRK15061.1"/>
    <property type="match status" value="1"/>
</dbReference>
<dbReference type="PANTHER" id="PTHR30555:SF0">
    <property type="entry name" value="CATALASE-PEROXIDASE"/>
    <property type="match status" value="1"/>
</dbReference>
<dbReference type="PANTHER" id="PTHR30555">
    <property type="entry name" value="HYDROPEROXIDASE I, BIFUNCTIONAL CATALASE-PEROXIDASE"/>
    <property type="match status" value="1"/>
</dbReference>
<dbReference type="Pfam" id="PF00141">
    <property type="entry name" value="peroxidase"/>
    <property type="match status" value="2"/>
</dbReference>
<dbReference type="PRINTS" id="PR00460">
    <property type="entry name" value="BPEROXIDASE"/>
</dbReference>
<dbReference type="PRINTS" id="PR00458">
    <property type="entry name" value="PEROXIDASE"/>
</dbReference>
<dbReference type="SUPFAM" id="SSF48113">
    <property type="entry name" value="Heme-dependent peroxidases"/>
    <property type="match status" value="2"/>
</dbReference>
<dbReference type="PROSITE" id="PS00435">
    <property type="entry name" value="PEROXIDASE_1"/>
    <property type="match status" value="1"/>
</dbReference>
<dbReference type="PROSITE" id="PS00436">
    <property type="entry name" value="PEROXIDASE_2"/>
    <property type="match status" value="1"/>
</dbReference>
<dbReference type="PROSITE" id="PS50873">
    <property type="entry name" value="PEROXIDASE_4"/>
    <property type="match status" value="1"/>
</dbReference>
<comment type="function">
    <text evidence="1">Bifunctional enzyme with both catalase and broad-spectrum peroxidase activity.</text>
</comment>
<comment type="catalytic activity">
    <reaction evidence="1">
        <text>H2O2 + AH2 = A + 2 H2O</text>
        <dbReference type="Rhea" id="RHEA:30275"/>
        <dbReference type="ChEBI" id="CHEBI:13193"/>
        <dbReference type="ChEBI" id="CHEBI:15377"/>
        <dbReference type="ChEBI" id="CHEBI:16240"/>
        <dbReference type="ChEBI" id="CHEBI:17499"/>
        <dbReference type="EC" id="1.11.1.21"/>
    </reaction>
</comment>
<comment type="catalytic activity">
    <reaction evidence="1">
        <text>2 H2O2 = O2 + 2 H2O</text>
        <dbReference type="Rhea" id="RHEA:20309"/>
        <dbReference type="ChEBI" id="CHEBI:15377"/>
        <dbReference type="ChEBI" id="CHEBI:15379"/>
        <dbReference type="ChEBI" id="CHEBI:16240"/>
        <dbReference type="EC" id="1.11.1.21"/>
    </reaction>
</comment>
<comment type="cofactor">
    <cofactor evidence="1">
        <name>heme b</name>
        <dbReference type="ChEBI" id="CHEBI:60344"/>
    </cofactor>
    <text evidence="1">Binds 1 heme b (iron(II)-protoporphyrin IX) group per dimer.</text>
</comment>
<comment type="subunit">
    <text evidence="1">Homodimer or homotetramer.</text>
</comment>
<comment type="PTM">
    <text evidence="1">Formation of the three residue Trp-Tyr-Met cross-link is important for the catalase, but not the peroxidase activity of the enzyme.</text>
</comment>
<comment type="similarity">
    <text evidence="1">Belongs to the peroxidase family. Peroxidase/catalase subfamily.</text>
</comment>
<reference key="1">
    <citation type="journal article" date="2010" name="J. Bacteriol.">
        <title>Whole genome sequences of two Xylella fastidiosa strains (M12 and M23) causing almond leaf scorch disease in California.</title>
        <authorList>
            <person name="Chen J."/>
            <person name="Xie G."/>
            <person name="Han S."/>
            <person name="Chertkov O."/>
            <person name="Sims D."/>
            <person name="Civerolo E.L."/>
        </authorList>
    </citation>
    <scope>NUCLEOTIDE SEQUENCE [LARGE SCALE GENOMIC DNA]</scope>
    <source>
        <strain>M12</strain>
    </source>
</reference>
<keyword id="KW-0349">Heme</keyword>
<keyword id="KW-0376">Hydrogen peroxide</keyword>
<keyword id="KW-0408">Iron</keyword>
<keyword id="KW-0479">Metal-binding</keyword>
<keyword id="KW-0560">Oxidoreductase</keyword>
<keyword id="KW-0575">Peroxidase</keyword>
<organism>
    <name type="scientific">Xylella fastidiosa (strain M12)</name>
    <dbReference type="NCBI Taxonomy" id="405440"/>
    <lineage>
        <taxon>Bacteria</taxon>
        <taxon>Pseudomonadati</taxon>
        <taxon>Pseudomonadota</taxon>
        <taxon>Gammaproteobacteria</taxon>
        <taxon>Lysobacterales</taxon>
        <taxon>Lysobacteraceae</taxon>
        <taxon>Xylella</taxon>
    </lineage>
</organism>
<protein>
    <recommendedName>
        <fullName evidence="1">Catalase-peroxidase</fullName>
        <shortName evidence="1">CP</shortName>
        <ecNumber evidence="1">1.11.1.21</ecNumber>
    </recommendedName>
    <alternativeName>
        <fullName evidence="1">Peroxidase/catalase</fullName>
    </alternativeName>
</protein>
<sequence>MRDMRASSPETTSAVKCPFNKTAVEGTHNKDWWPNQLRVDLLHQHSNKSNPLGETFDYAKVFQKLDYAALKRDLHALMTDSQDWWPADFGHYGGLFIRMAWHSAGTYRIGDGRGGAGRGQQRFAPLNSWPDNVSLDKARRLLWPIKKKYGQQISWADLIVLAGNVALESMGFKTFGFAGGRVDTWEPDQDVYWGREMTWLGGDVRYGAVSEGVHHPDEHSGAKEKASKNSDSRVLENPLAAVQMGLIYVNPEGPDGRPDPLASARDIRETFARMAMNDEETVALIAGGHTFGKTHGAAPADNVGPEPEAGELEQQGLGWHNRFGSGKAGDTITSGLEVTWTKTPTQWSNDFFEHLFGYEWELTKSPAGAYQWVAKDAAATIPHAHDPSKKLLPMMLTSDLALRFDPVYEKISRHFHAHPDQFADAFARAWFKLTHRDMGPRVRYLGPEVPAEELIWQDPVPKVSHVLVDAQDLLALKHKISASGLGISQLVSTAWASASTFRGSDKRGGANGGRLCLAPQNQWEVNQPQQLSVVLETLRRVQTEFNAQAGDKRISLADLIVLAGGVGVEQAAKRVGIVVEVPFVPGRTDALQEQTDVSSFAPLEPFADGFRNYVKGDEVVPSEHLLIDRAQLLTLTAPEMTVLIGGLRVLGANVGGVKHGVFTDRLGTLSNDFFINLLDMGTEWAPVSKERHVFEGRDRRTGVLKWTGTRVDLVFGSNALLRALAEVYAAVDAQEKFVRDFVAAWSKVMHLDRFDLV</sequence>